<reference key="1">
    <citation type="submission" date="2000-04" db="EMBL/GenBank/DDBJ databases">
        <title>Isolation of full-length cDNA clones from mouse brain cDNA library made by oligo-capping method.</title>
        <authorList>
            <person name="Osada N."/>
            <person name="Kusuda J."/>
            <person name="Tanuma R."/>
            <person name="Ito A."/>
            <person name="Hirata M."/>
            <person name="Sugano S."/>
            <person name="Hashimoto K."/>
        </authorList>
    </citation>
    <scope>NUCLEOTIDE SEQUENCE [LARGE SCALE MRNA] (ISOFORM 2)</scope>
    <source>
        <strain>C57BL/6J</strain>
        <tissue>Brain</tissue>
    </source>
</reference>
<reference key="2">
    <citation type="journal article" date="2005" name="Science">
        <title>The transcriptional landscape of the mammalian genome.</title>
        <authorList>
            <person name="Carninci P."/>
            <person name="Kasukawa T."/>
            <person name="Katayama S."/>
            <person name="Gough J."/>
            <person name="Frith M.C."/>
            <person name="Maeda N."/>
            <person name="Oyama R."/>
            <person name="Ravasi T."/>
            <person name="Lenhard B."/>
            <person name="Wells C."/>
            <person name="Kodzius R."/>
            <person name="Shimokawa K."/>
            <person name="Bajic V.B."/>
            <person name="Brenner S.E."/>
            <person name="Batalov S."/>
            <person name="Forrest A.R."/>
            <person name="Zavolan M."/>
            <person name="Davis M.J."/>
            <person name="Wilming L.G."/>
            <person name="Aidinis V."/>
            <person name="Allen J.E."/>
            <person name="Ambesi-Impiombato A."/>
            <person name="Apweiler R."/>
            <person name="Aturaliya R.N."/>
            <person name="Bailey T.L."/>
            <person name="Bansal M."/>
            <person name="Baxter L."/>
            <person name="Beisel K.W."/>
            <person name="Bersano T."/>
            <person name="Bono H."/>
            <person name="Chalk A.M."/>
            <person name="Chiu K.P."/>
            <person name="Choudhary V."/>
            <person name="Christoffels A."/>
            <person name="Clutterbuck D.R."/>
            <person name="Crowe M.L."/>
            <person name="Dalla E."/>
            <person name="Dalrymple B.P."/>
            <person name="de Bono B."/>
            <person name="Della Gatta G."/>
            <person name="di Bernardo D."/>
            <person name="Down T."/>
            <person name="Engstrom P."/>
            <person name="Fagiolini M."/>
            <person name="Faulkner G."/>
            <person name="Fletcher C.F."/>
            <person name="Fukushima T."/>
            <person name="Furuno M."/>
            <person name="Futaki S."/>
            <person name="Gariboldi M."/>
            <person name="Georgii-Hemming P."/>
            <person name="Gingeras T.R."/>
            <person name="Gojobori T."/>
            <person name="Green R.E."/>
            <person name="Gustincich S."/>
            <person name="Harbers M."/>
            <person name="Hayashi Y."/>
            <person name="Hensch T.K."/>
            <person name="Hirokawa N."/>
            <person name="Hill D."/>
            <person name="Huminiecki L."/>
            <person name="Iacono M."/>
            <person name="Ikeo K."/>
            <person name="Iwama A."/>
            <person name="Ishikawa T."/>
            <person name="Jakt M."/>
            <person name="Kanapin A."/>
            <person name="Katoh M."/>
            <person name="Kawasawa Y."/>
            <person name="Kelso J."/>
            <person name="Kitamura H."/>
            <person name="Kitano H."/>
            <person name="Kollias G."/>
            <person name="Krishnan S.P."/>
            <person name="Kruger A."/>
            <person name="Kummerfeld S.K."/>
            <person name="Kurochkin I.V."/>
            <person name="Lareau L.F."/>
            <person name="Lazarevic D."/>
            <person name="Lipovich L."/>
            <person name="Liu J."/>
            <person name="Liuni S."/>
            <person name="McWilliam S."/>
            <person name="Madan Babu M."/>
            <person name="Madera M."/>
            <person name="Marchionni L."/>
            <person name="Matsuda H."/>
            <person name="Matsuzawa S."/>
            <person name="Miki H."/>
            <person name="Mignone F."/>
            <person name="Miyake S."/>
            <person name="Morris K."/>
            <person name="Mottagui-Tabar S."/>
            <person name="Mulder N."/>
            <person name="Nakano N."/>
            <person name="Nakauchi H."/>
            <person name="Ng P."/>
            <person name="Nilsson R."/>
            <person name="Nishiguchi S."/>
            <person name="Nishikawa S."/>
            <person name="Nori F."/>
            <person name="Ohara O."/>
            <person name="Okazaki Y."/>
            <person name="Orlando V."/>
            <person name="Pang K.C."/>
            <person name="Pavan W.J."/>
            <person name="Pavesi G."/>
            <person name="Pesole G."/>
            <person name="Petrovsky N."/>
            <person name="Piazza S."/>
            <person name="Reed J."/>
            <person name="Reid J.F."/>
            <person name="Ring B.Z."/>
            <person name="Ringwald M."/>
            <person name="Rost B."/>
            <person name="Ruan Y."/>
            <person name="Salzberg S.L."/>
            <person name="Sandelin A."/>
            <person name="Schneider C."/>
            <person name="Schoenbach C."/>
            <person name="Sekiguchi K."/>
            <person name="Semple C.A."/>
            <person name="Seno S."/>
            <person name="Sessa L."/>
            <person name="Sheng Y."/>
            <person name="Shibata Y."/>
            <person name="Shimada H."/>
            <person name="Shimada K."/>
            <person name="Silva D."/>
            <person name="Sinclair B."/>
            <person name="Sperling S."/>
            <person name="Stupka E."/>
            <person name="Sugiura K."/>
            <person name="Sultana R."/>
            <person name="Takenaka Y."/>
            <person name="Taki K."/>
            <person name="Tammoja K."/>
            <person name="Tan S.L."/>
            <person name="Tang S."/>
            <person name="Taylor M.S."/>
            <person name="Tegner J."/>
            <person name="Teichmann S.A."/>
            <person name="Ueda H.R."/>
            <person name="van Nimwegen E."/>
            <person name="Verardo R."/>
            <person name="Wei C.L."/>
            <person name="Yagi K."/>
            <person name="Yamanishi H."/>
            <person name="Zabarovsky E."/>
            <person name="Zhu S."/>
            <person name="Zimmer A."/>
            <person name="Hide W."/>
            <person name="Bult C."/>
            <person name="Grimmond S.M."/>
            <person name="Teasdale R.D."/>
            <person name="Liu E.T."/>
            <person name="Brusic V."/>
            <person name="Quackenbush J."/>
            <person name="Wahlestedt C."/>
            <person name="Mattick J.S."/>
            <person name="Hume D.A."/>
            <person name="Kai C."/>
            <person name="Sasaki D."/>
            <person name="Tomaru Y."/>
            <person name="Fukuda S."/>
            <person name="Kanamori-Katayama M."/>
            <person name="Suzuki M."/>
            <person name="Aoki J."/>
            <person name="Arakawa T."/>
            <person name="Iida J."/>
            <person name="Imamura K."/>
            <person name="Itoh M."/>
            <person name="Kato T."/>
            <person name="Kawaji H."/>
            <person name="Kawagashira N."/>
            <person name="Kawashima T."/>
            <person name="Kojima M."/>
            <person name="Kondo S."/>
            <person name="Konno H."/>
            <person name="Nakano K."/>
            <person name="Ninomiya N."/>
            <person name="Nishio T."/>
            <person name="Okada M."/>
            <person name="Plessy C."/>
            <person name="Shibata K."/>
            <person name="Shiraki T."/>
            <person name="Suzuki S."/>
            <person name="Tagami M."/>
            <person name="Waki K."/>
            <person name="Watahiki A."/>
            <person name="Okamura-Oho Y."/>
            <person name="Suzuki H."/>
            <person name="Kawai J."/>
            <person name="Hayashizaki Y."/>
        </authorList>
    </citation>
    <scope>NUCLEOTIDE SEQUENCE [LARGE SCALE MRNA] (ISOFORM 1)</scope>
    <source>
        <strain>C57BL/6J</strain>
    </source>
</reference>
<reference key="3">
    <citation type="journal article" date="2004" name="Genome Res.">
        <title>The status, quality, and expansion of the NIH full-length cDNA project: the Mammalian Gene Collection (MGC).</title>
        <authorList>
            <consortium name="The MGC Project Team"/>
        </authorList>
    </citation>
    <scope>NUCLEOTIDE SEQUENCE [LARGE SCALE MRNA] (ISOFORM 1)</scope>
    <source>
        <strain>Czech II</strain>
        <tissue>Mammary gland</tissue>
    </source>
</reference>
<reference key="4">
    <citation type="submission" date="2009-01" db="UniProtKB">
        <authorList>
            <person name="Lubec G."/>
            <person name="Sunyer B."/>
            <person name="Chen W.-Q."/>
        </authorList>
    </citation>
    <scope>PROTEIN SEQUENCE OF 79-86</scope>
    <scope>IDENTIFICATION BY MASS SPECTROMETRY</scope>
    <source>
        <strain>OF1</strain>
        <tissue>Hippocampus</tissue>
    </source>
</reference>
<proteinExistence type="evidence at protein level"/>
<comment type="function">
    <text evidence="1">Promotes the degradation of p53/TP53 protein and inhibits its transactivity.</text>
</comment>
<comment type="subunit">
    <text evidence="1">Interacts with p53/TP53.</text>
</comment>
<comment type="subcellular location">
    <subcellularLocation>
        <location evidence="1">Nucleus</location>
    </subcellularLocation>
    <text evidence="1">Colocalizes with p53/TP53.</text>
</comment>
<comment type="alternative products">
    <event type="alternative splicing"/>
    <isoform>
        <id>Q3ULM0-1</id>
        <name>1</name>
        <sequence type="displayed"/>
    </isoform>
    <isoform>
        <id>Q3ULM0-2</id>
        <name>2</name>
        <sequence type="described" ref="VSP_022717 VSP_022718"/>
    </isoform>
</comment>
<accession>Q3ULM0</accession>
<accession>Q8K5E2</accession>
<accession>Q8VEI0</accession>
<gene>
    <name type="primary">Ccdc106</name>
    <name type="ORF">MNCb-2071</name>
</gene>
<sequence>MNDRNNRWRTMKDEETFEISIPFEEAPHLDSQILYRLSPSRRNVEEPPEGASPTLALMSSVKAQLHMALERNSWLQKRIEDLEEERDFLRCQLDKFISSARMDAEDYCRMKPGPRRVDGDSRAGVGEASDPESAASSFSGVSEDGSASERKRQKQKGSTSRKRFGKTKARERQRVKDADGVLCRYKKILGTFQKLKSMSRAFEHHRVDRNTVALTTPIAELLIVAPEKLAEVGEFDPSKERLLEYSRRCFLALDDETLKKVQALKKSKLLLPITYRFKR</sequence>
<evidence type="ECO:0000250" key="1"/>
<evidence type="ECO:0000250" key="2">
    <source>
        <dbReference type="UniProtKB" id="Q9BWC9"/>
    </source>
</evidence>
<evidence type="ECO:0000255" key="3"/>
<evidence type="ECO:0000256" key="4">
    <source>
        <dbReference type="SAM" id="MobiDB-lite"/>
    </source>
</evidence>
<evidence type="ECO:0000303" key="5">
    <source ref="1"/>
</evidence>
<evidence type="ECO:0000305" key="6"/>
<feature type="chain" id="PRO_0000274344" description="Coiled-coil domain-containing protein 106">
    <location>
        <begin position="1"/>
        <end position="279"/>
    </location>
</feature>
<feature type="region of interest" description="Disordered" evidence="4">
    <location>
        <begin position="109"/>
        <end position="173"/>
    </location>
</feature>
<feature type="coiled-coil region" evidence="3">
    <location>
        <begin position="62"/>
        <end position="101"/>
    </location>
</feature>
<feature type="short sequence motif" description="Bipartite nuclear localization signal" evidence="1">
    <location>
        <begin position="151"/>
        <end position="164"/>
    </location>
</feature>
<feature type="compositionally biased region" description="Basic and acidic residues" evidence="4">
    <location>
        <begin position="109"/>
        <end position="121"/>
    </location>
</feature>
<feature type="compositionally biased region" description="Basic residues" evidence="4">
    <location>
        <begin position="151"/>
        <end position="167"/>
    </location>
</feature>
<feature type="modified residue" description="Phosphoserine" evidence="2">
    <location>
        <position position="129"/>
    </location>
</feature>
<feature type="splice variant" id="VSP_022717" description="In isoform 2." evidence="5">
    <original>VKDADGVLCRYKKILGTFQKLKSMSRAF</original>
    <variation>GEWGVGTCDGCVEGLCTQNRSVSSTVMP</variation>
    <location>
        <begin position="175"/>
        <end position="202"/>
    </location>
</feature>
<feature type="splice variant" id="VSP_022718" description="In isoform 2." evidence="5">
    <location>
        <begin position="203"/>
        <end position="279"/>
    </location>
</feature>
<feature type="sequence conflict" description="In Ref. 1; BAB93550." evidence="6" ref="1">
    <original>N</original>
    <variation>S</variation>
    <location>
        <position position="6"/>
    </location>
</feature>
<feature type="sequence conflict" description="In Ref. 3; AAH18462." evidence="6" ref="3">
    <original>S</original>
    <variation>G</variation>
    <location>
        <position position="160"/>
    </location>
</feature>
<protein>
    <recommendedName>
        <fullName>Coiled-coil domain-containing protein 106</fullName>
    </recommendedName>
</protein>
<keyword id="KW-0025">Alternative splicing</keyword>
<keyword id="KW-0175">Coiled coil</keyword>
<keyword id="KW-0903">Direct protein sequencing</keyword>
<keyword id="KW-0539">Nucleus</keyword>
<keyword id="KW-0597">Phosphoprotein</keyword>
<keyword id="KW-1185">Reference proteome</keyword>
<dbReference type="EMBL" id="AB041804">
    <property type="protein sequence ID" value="BAB93550.1"/>
    <property type="molecule type" value="mRNA"/>
</dbReference>
<dbReference type="EMBL" id="AK145417">
    <property type="protein sequence ID" value="BAE26428.1"/>
    <property type="molecule type" value="mRNA"/>
</dbReference>
<dbReference type="EMBL" id="BC018462">
    <property type="protein sequence ID" value="AAH18462.1"/>
    <property type="molecule type" value="mRNA"/>
</dbReference>
<dbReference type="CCDS" id="CCDS20757.1">
    <molecule id="Q3ULM0-1"/>
</dbReference>
<dbReference type="RefSeq" id="NP_001277358.1">
    <property type="nucleotide sequence ID" value="NM_001290429.1"/>
</dbReference>
<dbReference type="RefSeq" id="NP_001277361.1">
    <molecule id="Q3ULM0-1"/>
    <property type="nucleotide sequence ID" value="NM_001290432.2"/>
</dbReference>
<dbReference type="RefSeq" id="NP_001407638.1">
    <molecule id="Q3ULM0-1"/>
    <property type="nucleotide sequence ID" value="NM_001420709.1"/>
</dbReference>
<dbReference type="RefSeq" id="NP_001407639.1">
    <molecule id="Q3ULM0-1"/>
    <property type="nucleotide sequence ID" value="NM_001420710.1"/>
</dbReference>
<dbReference type="RefSeq" id="NP_001407640.1">
    <molecule id="Q3ULM0-1"/>
    <property type="nucleotide sequence ID" value="NM_001420711.1"/>
</dbReference>
<dbReference type="RefSeq" id="NP_001407641.1">
    <molecule id="Q3ULM0-1"/>
    <property type="nucleotide sequence ID" value="NM_001420712.1"/>
</dbReference>
<dbReference type="RefSeq" id="NP_001407642.1">
    <molecule id="Q3ULM0-1"/>
    <property type="nucleotide sequence ID" value="NM_001420713.1"/>
</dbReference>
<dbReference type="RefSeq" id="NP_001407643.1">
    <molecule id="Q3ULM0-1"/>
    <property type="nucleotide sequence ID" value="NM_001420714.1"/>
</dbReference>
<dbReference type="RefSeq" id="NP_001407644.1">
    <molecule id="Q3ULM0-1"/>
    <property type="nucleotide sequence ID" value="NM_001420715.1"/>
</dbReference>
<dbReference type="RefSeq" id="NP_001407645.1">
    <molecule id="Q3ULM0-1"/>
    <property type="nucleotide sequence ID" value="NM_001420716.1"/>
</dbReference>
<dbReference type="RefSeq" id="NP_666290.2">
    <molecule id="Q3ULM0-1"/>
    <property type="nucleotide sequence ID" value="NM_146178.3"/>
</dbReference>
<dbReference type="RefSeq" id="XP_006539847.1">
    <property type="nucleotide sequence ID" value="XM_006539784.3"/>
</dbReference>
<dbReference type="RefSeq" id="XP_006539848.1">
    <property type="nucleotide sequence ID" value="XM_006539785.3"/>
</dbReference>
<dbReference type="RefSeq" id="XP_006539849.1">
    <property type="nucleotide sequence ID" value="XM_006539786.3"/>
</dbReference>
<dbReference type="RefSeq" id="XP_006539851.1">
    <property type="nucleotide sequence ID" value="XM_006539788.3"/>
</dbReference>
<dbReference type="FunCoup" id="Q3ULM0">
    <property type="interactions" value="1087"/>
</dbReference>
<dbReference type="STRING" id="10090.ENSMUSP00000104211"/>
<dbReference type="iPTMnet" id="Q3ULM0"/>
<dbReference type="PhosphoSitePlus" id="Q3ULM0"/>
<dbReference type="PaxDb" id="10090-ENSMUSP00000041033"/>
<dbReference type="ProteomicsDB" id="281480">
    <molecule id="Q3ULM0-1"/>
</dbReference>
<dbReference type="ProteomicsDB" id="281481">
    <molecule id="Q3ULM0-2"/>
</dbReference>
<dbReference type="Antibodypedia" id="33135">
    <property type="antibodies" value="186 antibodies from 28 providers"/>
</dbReference>
<dbReference type="DNASU" id="232821"/>
<dbReference type="Ensembl" id="ENSMUST00000045543.8">
    <molecule id="Q3ULM0-1"/>
    <property type="protein sequence ID" value="ENSMUSP00000041033.6"/>
    <property type="gene ID" value="ENSMUSG00000035228.16"/>
</dbReference>
<dbReference type="Ensembl" id="ENSMUST00000207974.2">
    <molecule id="Q3ULM0-2"/>
    <property type="protein sequence ID" value="ENSMUSP00000146775.2"/>
    <property type="gene ID" value="ENSMUSG00000035228.16"/>
</dbReference>
<dbReference type="GeneID" id="232821"/>
<dbReference type="KEGG" id="mmu:232821"/>
<dbReference type="UCSC" id="uc009ezr.3">
    <molecule id="Q3ULM0-2"/>
    <property type="organism name" value="mouse"/>
</dbReference>
<dbReference type="UCSC" id="uc009ezs.2">
    <molecule id="Q3ULM0-1"/>
    <property type="organism name" value="mouse"/>
</dbReference>
<dbReference type="AGR" id="MGI:2385900"/>
<dbReference type="CTD" id="29903"/>
<dbReference type="MGI" id="MGI:2385900">
    <property type="gene designation" value="Ccdc106"/>
</dbReference>
<dbReference type="VEuPathDB" id="HostDB:ENSMUSG00000035228"/>
<dbReference type="eggNOG" id="ENOG502RTFM">
    <property type="taxonomic scope" value="Eukaryota"/>
</dbReference>
<dbReference type="GeneTree" id="ENSGT00390000013183"/>
<dbReference type="HOGENOM" id="CLU_069155_0_0_1"/>
<dbReference type="InParanoid" id="Q3ULM0"/>
<dbReference type="OrthoDB" id="8721206at2759"/>
<dbReference type="PhylomeDB" id="Q3ULM0"/>
<dbReference type="TreeFam" id="TF331729"/>
<dbReference type="BioGRID-ORCS" id="232821">
    <property type="hits" value="1 hit in 76 CRISPR screens"/>
</dbReference>
<dbReference type="ChiTaRS" id="Ccdc106">
    <property type="organism name" value="mouse"/>
</dbReference>
<dbReference type="PRO" id="PR:Q3ULM0"/>
<dbReference type="Proteomes" id="UP000000589">
    <property type="component" value="Chromosome 7"/>
</dbReference>
<dbReference type="RNAct" id="Q3ULM0">
    <property type="molecule type" value="protein"/>
</dbReference>
<dbReference type="Bgee" id="ENSMUSG00000035228">
    <property type="expression patterns" value="Expressed in embryonic brain and 148 other cell types or tissues"/>
</dbReference>
<dbReference type="ExpressionAtlas" id="Q3ULM0">
    <property type="expression patterns" value="baseline and differential"/>
</dbReference>
<dbReference type="GO" id="GO:0005829">
    <property type="term" value="C:cytosol"/>
    <property type="evidence" value="ECO:0007669"/>
    <property type="project" value="Ensembl"/>
</dbReference>
<dbReference type="GO" id="GO:0005654">
    <property type="term" value="C:nucleoplasm"/>
    <property type="evidence" value="ECO:0007669"/>
    <property type="project" value="Ensembl"/>
</dbReference>
<dbReference type="InterPro" id="IPR031591">
    <property type="entry name" value="CCDC106"/>
</dbReference>
<dbReference type="PANTHER" id="PTHR16477">
    <property type="entry name" value="COILED-COIL DOMAIN-CONTAINING PROTEIN 106"/>
    <property type="match status" value="1"/>
</dbReference>
<dbReference type="PANTHER" id="PTHR16477:SF2">
    <property type="entry name" value="COILED-COIL DOMAIN-CONTAINING PROTEIN 106"/>
    <property type="match status" value="1"/>
</dbReference>
<dbReference type="Pfam" id="PF15794">
    <property type="entry name" value="CCDC106"/>
    <property type="match status" value="1"/>
</dbReference>
<name>CC106_MOUSE</name>
<organism>
    <name type="scientific">Mus musculus</name>
    <name type="common">Mouse</name>
    <dbReference type="NCBI Taxonomy" id="10090"/>
    <lineage>
        <taxon>Eukaryota</taxon>
        <taxon>Metazoa</taxon>
        <taxon>Chordata</taxon>
        <taxon>Craniata</taxon>
        <taxon>Vertebrata</taxon>
        <taxon>Euteleostomi</taxon>
        <taxon>Mammalia</taxon>
        <taxon>Eutheria</taxon>
        <taxon>Euarchontoglires</taxon>
        <taxon>Glires</taxon>
        <taxon>Rodentia</taxon>
        <taxon>Myomorpha</taxon>
        <taxon>Muroidea</taxon>
        <taxon>Muridae</taxon>
        <taxon>Murinae</taxon>
        <taxon>Mus</taxon>
        <taxon>Mus</taxon>
    </lineage>
</organism>